<sequence>MTDHKEMSTKYDPNQVEDGRYQDWLKEDLFKPNANPDAKPYSIVIPPPNVTGKLHLGHAWDTTLQDMLIRQKRMQGYDVLWLPGMDHAGIATQAKVEAKLAEQGISRYDLGREKFIDQVWEWKDEYAATIHDQWAKMGLSLDYSRERFTLDDGLSDAVRKVFVNLYNKGLIYRGEYIINWDPKARTALSDIEVLHQDDEGAFYHVSYPLTDGSGSIEIATTRPETLPGDTAIAVHPDDERYADLVGKTVTLPLMNREIPIIADHYVDKDFGTGALKITPAHDPNDFEVGNRHDLPRINVMNEDASMNESAGKYNGMDRFEARKAIVADLKEQGFLIKVDPMTHSVGHSERTGVQVEARLSTQWFVKMKPLAEMALKNQETDQKVNFVPERFENTFTQWMENVHDWVISRQLWWGHQIPAWYHKQTGEMYVGEEAPEDIENWTQDSDVLDTWFSSALWPFSTMGWPNTEAPDFKRYFPTNTLVTGYDIIFFWVSRMIFQSLEFTEQRPFEHVLIHGLIRDEQGRKMSKSLGNGIDPMEVIEKYGADALRWFLTSGSTPGQDVRFSYTKMDAAWNFINKIWNASRFVIMNLEDTPAPTKVPEAANLDLTDKWILSQLNQTVADVTRLYEGFEFGEAGRTLYNFIWNDFCDWYIEMAKEVLYGDDQEAIANKRYNLAYVLDQTLRLLHPVMPFVTEEIWQSMPHTGESIMTASYPEVHAELDDQEATTQMNALIDLIRSVRNIRSEANAPLSKPIDILINIQDTPLMAIFKQNQDFIERFVHPKSLEIAEGLTAPALAKTAIISGAEVYVPLAELLDLDEEITRLEGELKRLNGEIKRAQGKLANKGFTDRAPEKVVQEERDKQADYEQQYQSVEKRLAELKAAR</sequence>
<proteinExistence type="inferred from homology"/>
<gene>
    <name evidence="1" type="primary">valS</name>
    <name type="ordered locus">LCA_0849</name>
</gene>
<name>SYV_LATSS</name>
<comment type="function">
    <text evidence="1">Catalyzes the attachment of valine to tRNA(Val). As ValRS can inadvertently accommodate and process structurally similar amino acids such as threonine, to avoid such errors, it has a 'posttransfer' editing activity that hydrolyzes mischarged Thr-tRNA(Val) in a tRNA-dependent manner.</text>
</comment>
<comment type="catalytic activity">
    <reaction evidence="1">
        <text>tRNA(Val) + L-valine + ATP = L-valyl-tRNA(Val) + AMP + diphosphate</text>
        <dbReference type="Rhea" id="RHEA:10704"/>
        <dbReference type="Rhea" id="RHEA-COMP:9672"/>
        <dbReference type="Rhea" id="RHEA-COMP:9708"/>
        <dbReference type="ChEBI" id="CHEBI:30616"/>
        <dbReference type="ChEBI" id="CHEBI:33019"/>
        <dbReference type="ChEBI" id="CHEBI:57762"/>
        <dbReference type="ChEBI" id="CHEBI:78442"/>
        <dbReference type="ChEBI" id="CHEBI:78537"/>
        <dbReference type="ChEBI" id="CHEBI:456215"/>
        <dbReference type="EC" id="6.1.1.9"/>
    </reaction>
</comment>
<comment type="subunit">
    <text evidence="1">Monomer.</text>
</comment>
<comment type="subcellular location">
    <subcellularLocation>
        <location evidence="1">Cytoplasm</location>
    </subcellularLocation>
</comment>
<comment type="domain">
    <text evidence="1">ValRS has two distinct active sites: one for aminoacylation and one for editing. The misactivated threonine is translocated from the active site to the editing site.</text>
</comment>
<comment type="domain">
    <text evidence="1">The C-terminal coiled-coil domain is crucial for aminoacylation activity.</text>
</comment>
<comment type="similarity">
    <text evidence="1">Belongs to the class-I aminoacyl-tRNA synthetase family. ValS type 1 subfamily.</text>
</comment>
<organism>
    <name type="scientific">Latilactobacillus sakei subsp. sakei (strain 23K)</name>
    <name type="common">Lactobacillus sakei subsp. sakei</name>
    <dbReference type="NCBI Taxonomy" id="314315"/>
    <lineage>
        <taxon>Bacteria</taxon>
        <taxon>Bacillati</taxon>
        <taxon>Bacillota</taxon>
        <taxon>Bacilli</taxon>
        <taxon>Lactobacillales</taxon>
        <taxon>Lactobacillaceae</taxon>
        <taxon>Latilactobacillus</taxon>
    </lineage>
</organism>
<keyword id="KW-0030">Aminoacyl-tRNA synthetase</keyword>
<keyword id="KW-0067">ATP-binding</keyword>
<keyword id="KW-0175">Coiled coil</keyword>
<keyword id="KW-0963">Cytoplasm</keyword>
<keyword id="KW-0436">Ligase</keyword>
<keyword id="KW-0547">Nucleotide-binding</keyword>
<keyword id="KW-0648">Protein biosynthesis</keyword>
<keyword id="KW-1185">Reference proteome</keyword>
<evidence type="ECO:0000255" key="1">
    <source>
        <dbReference type="HAMAP-Rule" id="MF_02004"/>
    </source>
</evidence>
<evidence type="ECO:0000256" key="2">
    <source>
        <dbReference type="SAM" id="MobiDB-lite"/>
    </source>
</evidence>
<dbReference type="EC" id="6.1.1.9" evidence="1"/>
<dbReference type="EMBL" id="CR936503">
    <property type="protein sequence ID" value="CAI55150.1"/>
    <property type="molecule type" value="Genomic_DNA"/>
</dbReference>
<dbReference type="RefSeq" id="WP_011374552.1">
    <property type="nucleotide sequence ID" value="NC_007576.1"/>
</dbReference>
<dbReference type="SMR" id="Q38XD1"/>
<dbReference type="STRING" id="314315.LCA_0849"/>
<dbReference type="KEGG" id="lsa:LCA_0849"/>
<dbReference type="eggNOG" id="COG0525">
    <property type="taxonomic scope" value="Bacteria"/>
</dbReference>
<dbReference type="HOGENOM" id="CLU_001493_0_2_9"/>
<dbReference type="OrthoDB" id="9810365at2"/>
<dbReference type="Proteomes" id="UP000002707">
    <property type="component" value="Chromosome"/>
</dbReference>
<dbReference type="GO" id="GO:0005829">
    <property type="term" value="C:cytosol"/>
    <property type="evidence" value="ECO:0007669"/>
    <property type="project" value="TreeGrafter"/>
</dbReference>
<dbReference type="GO" id="GO:0002161">
    <property type="term" value="F:aminoacyl-tRNA deacylase activity"/>
    <property type="evidence" value="ECO:0007669"/>
    <property type="project" value="InterPro"/>
</dbReference>
<dbReference type="GO" id="GO:0005524">
    <property type="term" value="F:ATP binding"/>
    <property type="evidence" value="ECO:0007669"/>
    <property type="project" value="UniProtKB-UniRule"/>
</dbReference>
<dbReference type="GO" id="GO:0004832">
    <property type="term" value="F:valine-tRNA ligase activity"/>
    <property type="evidence" value="ECO:0007669"/>
    <property type="project" value="UniProtKB-UniRule"/>
</dbReference>
<dbReference type="GO" id="GO:0006438">
    <property type="term" value="P:valyl-tRNA aminoacylation"/>
    <property type="evidence" value="ECO:0007669"/>
    <property type="project" value="UniProtKB-UniRule"/>
</dbReference>
<dbReference type="CDD" id="cd07962">
    <property type="entry name" value="Anticodon_Ia_Val"/>
    <property type="match status" value="1"/>
</dbReference>
<dbReference type="CDD" id="cd00817">
    <property type="entry name" value="ValRS_core"/>
    <property type="match status" value="1"/>
</dbReference>
<dbReference type="FunFam" id="1.10.287.380:FF:000001">
    <property type="entry name" value="Valine--tRNA ligase"/>
    <property type="match status" value="1"/>
</dbReference>
<dbReference type="FunFam" id="1.10.730.10:FF:000014">
    <property type="entry name" value="Valine--tRNA ligase"/>
    <property type="match status" value="1"/>
</dbReference>
<dbReference type="FunFam" id="3.40.50.620:FF:000032">
    <property type="entry name" value="Valine--tRNA ligase"/>
    <property type="match status" value="1"/>
</dbReference>
<dbReference type="FunFam" id="3.40.50.620:FF:000098">
    <property type="entry name" value="Valine--tRNA ligase"/>
    <property type="match status" value="1"/>
</dbReference>
<dbReference type="FunFam" id="3.90.740.10:FF:000005">
    <property type="entry name" value="Valine--tRNA ligase, mitochondrial"/>
    <property type="match status" value="1"/>
</dbReference>
<dbReference type="Gene3D" id="3.40.50.620">
    <property type="entry name" value="HUPs"/>
    <property type="match status" value="2"/>
</dbReference>
<dbReference type="Gene3D" id="1.10.730.10">
    <property type="entry name" value="Isoleucyl-tRNA Synthetase, Domain 1"/>
    <property type="match status" value="1"/>
</dbReference>
<dbReference type="Gene3D" id="1.10.287.380">
    <property type="entry name" value="Valyl-tRNA synthetase, C-terminal domain"/>
    <property type="match status" value="1"/>
</dbReference>
<dbReference type="Gene3D" id="3.90.740.10">
    <property type="entry name" value="Valyl/Leucyl/Isoleucyl-tRNA synthetase, editing domain"/>
    <property type="match status" value="1"/>
</dbReference>
<dbReference type="HAMAP" id="MF_02004">
    <property type="entry name" value="Val_tRNA_synth_type1"/>
    <property type="match status" value="1"/>
</dbReference>
<dbReference type="InterPro" id="IPR001412">
    <property type="entry name" value="aa-tRNA-synth_I_CS"/>
</dbReference>
<dbReference type="InterPro" id="IPR002300">
    <property type="entry name" value="aa-tRNA-synth_Ia"/>
</dbReference>
<dbReference type="InterPro" id="IPR033705">
    <property type="entry name" value="Anticodon_Ia_Val"/>
</dbReference>
<dbReference type="InterPro" id="IPR013155">
    <property type="entry name" value="M/V/L/I-tRNA-synth_anticd-bd"/>
</dbReference>
<dbReference type="InterPro" id="IPR014729">
    <property type="entry name" value="Rossmann-like_a/b/a_fold"/>
</dbReference>
<dbReference type="InterPro" id="IPR010978">
    <property type="entry name" value="tRNA-bd_arm"/>
</dbReference>
<dbReference type="InterPro" id="IPR009080">
    <property type="entry name" value="tRNAsynth_Ia_anticodon-bd"/>
</dbReference>
<dbReference type="InterPro" id="IPR037118">
    <property type="entry name" value="Val-tRNA_synth_C_sf"/>
</dbReference>
<dbReference type="InterPro" id="IPR019499">
    <property type="entry name" value="Val-tRNA_synth_tRNA-bd"/>
</dbReference>
<dbReference type="InterPro" id="IPR009008">
    <property type="entry name" value="Val/Leu/Ile-tRNA-synth_edit"/>
</dbReference>
<dbReference type="InterPro" id="IPR002303">
    <property type="entry name" value="Valyl-tRNA_ligase"/>
</dbReference>
<dbReference type="NCBIfam" id="NF004349">
    <property type="entry name" value="PRK05729.1"/>
    <property type="match status" value="1"/>
</dbReference>
<dbReference type="NCBIfam" id="TIGR00422">
    <property type="entry name" value="valS"/>
    <property type="match status" value="1"/>
</dbReference>
<dbReference type="PANTHER" id="PTHR11946:SF93">
    <property type="entry name" value="VALINE--TRNA LIGASE, CHLOROPLASTIC_MITOCHONDRIAL 2"/>
    <property type="match status" value="1"/>
</dbReference>
<dbReference type="PANTHER" id="PTHR11946">
    <property type="entry name" value="VALYL-TRNA SYNTHETASES"/>
    <property type="match status" value="1"/>
</dbReference>
<dbReference type="Pfam" id="PF08264">
    <property type="entry name" value="Anticodon_1"/>
    <property type="match status" value="1"/>
</dbReference>
<dbReference type="Pfam" id="PF00133">
    <property type="entry name" value="tRNA-synt_1"/>
    <property type="match status" value="1"/>
</dbReference>
<dbReference type="Pfam" id="PF10458">
    <property type="entry name" value="Val_tRNA-synt_C"/>
    <property type="match status" value="1"/>
</dbReference>
<dbReference type="PRINTS" id="PR00986">
    <property type="entry name" value="TRNASYNTHVAL"/>
</dbReference>
<dbReference type="SUPFAM" id="SSF47323">
    <property type="entry name" value="Anticodon-binding domain of a subclass of class I aminoacyl-tRNA synthetases"/>
    <property type="match status" value="1"/>
</dbReference>
<dbReference type="SUPFAM" id="SSF52374">
    <property type="entry name" value="Nucleotidylyl transferase"/>
    <property type="match status" value="1"/>
</dbReference>
<dbReference type="SUPFAM" id="SSF46589">
    <property type="entry name" value="tRNA-binding arm"/>
    <property type="match status" value="1"/>
</dbReference>
<dbReference type="SUPFAM" id="SSF50677">
    <property type="entry name" value="ValRS/IleRS/LeuRS editing domain"/>
    <property type="match status" value="1"/>
</dbReference>
<dbReference type="PROSITE" id="PS00178">
    <property type="entry name" value="AA_TRNA_LIGASE_I"/>
    <property type="match status" value="1"/>
</dbReference>
<feature type="chain" id="PRO_0000224492" description="Valine--tRNA ligase">
    <location>
        <begin position="1"/>
        <end position="882"/>
    </location>
</feature>
<feature type="region of interest" description="Disordered" evidence="2">
    <location>
        <begin position="844"/>
        <end position="866"/>
    </location>
</feature>
<feature type="coiled-coil region" evidence="1">
    <location>
        <begin position="809"/>
        <end position="882"/>
    </location>
</feature>
<feature type="short sequence motif" description="'HIGH' region">
    <location>
        <begin position="48"/>
        <end position="58"/>
    </location>
</feature>
<feature type="short sequence motif" description="'KMSKS' region">
    <location>
        <begin position="524"/>
        <end position="528"/>
    </location>
</feature>
<feature type="compositionally biased region" description="Basic and acidic residues" evidence="2">
    <location>
        <begin position="845"/>
        <end position="863"/>
    </location>
</feature>
<feature type="binding site" evidence="1">
    <location>
        <position position="527"/>
    </location>
    <ligand>
        <name>ATP</name>
        <dbReference type="ChEBI" id="CHEBI:30616"/>
    </ligand>
</feature>
<reference key="1">
    <citation type="journal article" date="2005" name="Nat. Biotechnol.">
        <title>The complete genome sequence of the meat-borne lactic acid bacterium Lactobacillus sakei 23K.</title>
        <authorList>
            <person name="Chaillou S."/>
            <person name="Champomier-Verges M.-C."/>
            <person name="Cornet M."/>
            <person name="Crutz-Le Coq A.-M."/>
            <person name="Dudez A.-M."/>
            <person name="Martin V."/>
            <person name="Beaufils S."/>
            <person name="Darbon-Rongere E."/>
            <person name="Bossy R."/>
            <person name="Loux V."/>
            <person name="Zagorec M."/>
        </authorList>
    </citation>
    <scope>NUCLEOTIDE SEQUENCE [LARGE SCALE GENOMIC DNA]</scope>
    <source>
        <strain>23K</strain>
    </source>
</reference>
<protein>
    <recommendedName>
        <fullName evidence="1">Valine--tRNA ligase</fullName>
        <ecNumber evidence="1">6.1.1.9</ecNumber>
    </recommendedName>
    <alternativeName>
        <fullName evidence="1">Valyl-tRNA synthetase</fullName>
        <shortName evidence="1">ValRS</shortName>
    </alternativeName>
</protein>
<accession>Q38XD1</accession>